<keyword id="KW-0175">Coiled coil</keyword>
<keyword id="KW-0963">Cytoplasm</keyword>
<keyword id="KW-0479">Metal-binding</keyword>
<keyword id="KW-1185">Reference proteome</keyword>
<keyword id="KW-0677">Repeat</keyword>
<keyword id="KW-0862">Zinc</keyword>
<keyword id="KW-0863">Zinc-finger</keyword>
<proteinExistence type="inferred from homology"/>
<gene>
    <name type="ORF">DDB_G0290931</name>
</gene>
<comment type="function">
    <text evidence="1">Probable adapter protein and signal transducer that links members of the tumor necrosis factor receptor family to different signaling pathways by association with the receptor cytoplasmic domain and kinases.</text>
</comment>
<comment type="subcellular location">
    <subcellularLocation>
        <location evidence="1">Cytoplasm</location>
    </subcellularLocation>
</comment>
<comment type="domain">
    <text>The MATH/TRAF domain binds to receptor cytoplasmic domains.</text>
</comment>
<comment type="similarity">
    <text evidence="6">Belongs to the TNF receptor-associated factor family. A subfamily.</text>
</comment>
<accession>Q54FD5</accession>
<reference key="1">
    <citation type="journal article" date="2005" name="Nature">
        <title>The genome of the social amoeba Dictyostelium discoideum.</title>
        <authorList>
            <person name="Eichinger L."/>
            <person name="Pachebat J.A."/>
            <person name="Gloeckner G."/>
            <person name="Rajandream M.A."/>
            <person name="Sucgang R."/>
            <person name="Berriman M."/>
            <person name="Song J."/>
            <person name="Olsen R."/>
            <person name="Szafranski K."/>
            <person name="Xu Q."/>
            <person name="Tunggal B."/>
            <person name="Kummerfeld S."/>
            <person name="Madera M."/>
            <person name="Konfortov B.A."/>
            <person name="Rivero F."/>
            <person name="Bankier A.T."/>
            <person name="Lehmann R."/>
            <person name="Hamlin N."/>
            <person name="Davies R."/>
            <person name="Gaudet P."/>
            <person name="Fey P."/>
            <person name="Pilcher K."/>
            <person name="Chen G."/>
            <person name="Saunders D."/>
            <person name="Sodergren E.J."/>
            <person name="Davis P."/>
            <person name="Kerhornou A."/>
            <person name="Nie X."/>
            <person name="Hall N."/>
            <person name="Anjard C."/>
            <person name="Hemphill L."/>
            <person name="Bason N."/>
            <person name="Farbrother P."/>
            <person name="Desany B."/>
            <person name="Just E."/>
            <person name="Morio T."/>
            <person name="Rost R."/>
            <person name="Churcher C.M."/>
            <person name="Cooper J."/>
            <person name="Haydock S."/>
            <person name="van Driessche N."/>
            <person name="Cronin A."/>
            <person name="Goodhead I."/>
            <person name="Muzny D.M."/>
            <person name="Mourier T."/>
            <person name="Pain A."/>
            <person name="Lu M."/>
            <person name="Harper D."/>
            <person name="Lindsay R."/>
            <person name="Hauser H."/>
            <person name="James K.D."/>
            <person name="Quiles M."/>
            <person name="Madan Babu M."/>
            <person name="Saito T."/>
            <person name="Buchrieser C."/>
            <person name="Wardroper A."/>
            <person name="Felder M."/>
            <person name="Thangavelu M."/>
            <person name="Johnson D."/>
            <person name="Knights A."/>
            <person name="Loulseged H."/>
            <person name="Mungall K.L."/>
            <person name="Oliver K."/>
            <person name="Price C."/>
            <person name="Quail M.A."/>
            <person name="Urushihara H."/>
            <person name="Hernandez J."/>
            <person name="Rabbinowitsch E."/>
            <person name="Steffen D."/>
            <person name="Sanders M."/>
            <person name="Ma J."/>
            <person name="Kohara Y."/>
            <person name="Sharp S."/>
            <person name="Simmonds M.N."/>
            <person name="Spiegler S."/>
            <person name="Tivey A."/>
            <person name="Sugano S."/>
            <person name="White B."/>
            <person name="Walker D."/>
            <person name="Woodward J.R."/>
            <person name="Winckler T."/>
            <person name="Tanaka Y."/>
            <person name="Shaulsky G."/>
            <person name="Schleicher M."/>
            <person name="Weinstock G.M."/>
            <person name="Rosenthal A."/>
            <person name="Cox E.C."/>
            <person name="Chisholm R.L."/>
            <person name="Gibbs R.A."/>
            <person name="Loomis W.F."/>
            <person name="Platzer M."/>
            <person name="Kay R.R."/>
            <person name="Williams J.G."/>
            <person name="Dear P.H."/>
            <person name="Noegel A.A."/>
            <person name="Barrell B.G."/>
            <person name="Kuspa A."/>
        </authorList>
    </citation>
    <scope>NUCLEOTIDE SEQUENCE [LARGE SCALE GENOMIC DNA]</scope>
    <source>
        <strain>AX4</strain>
    </source>
</reference>
<sequence>MSIYSKFTINDVLLNKESLQKKNKYTCPICFELIYKKSIYQCSSGHYACQECWEKSLEIKQECMICRCKVKSFKNLSRCLVIEQNFSKKECNCIYSFHLDYFIDGANQENEDEENEDEENEDDEDENEDEENGEDDEDKDEDEENENENEENKDEENEKRKLIKDEENGCKEIINVDQLDRHIQNCKFKFVKCSHIGCDRVLRLNSLKEHENQCGFKLVKCEYCACDGIIQVQLENHYDECPKFVIGCPQGCLNFFERDQIKSHIENDCNNSTIQCKYYEYGCKVEMKRSELQRHLENVNHQLFMGKLIDKLSSTLDQSMKIQELLLKEIEKSKITCSELQRKNDELSSLITEIDDNYFNKNDFINSWKLTSQGYTNKWIISNYSNLVENTPHPEYIYSPSFDIVSREFVISIYPNGSLTGKDHLSLFLHNNNEDPNKLEFTLELVNLLDKSKSITRKGLEVFEEIERKGWSKFLASKLINKKNGWLSDDDKLTINIYVKILYDDIEPLES</sequence>
<evidence type="ECO:0000250" key="1"/>
<evidence type="ECO:0000255" key="2"/>
<evidence type="ECO:0000255" key="3">
    <source>
        <dbReference type="PROSITE-ProRule" id="PRU00129"/>
    </source>
</evidence>
<evidence type="ECO:0000255" key="4">
    <source>
        <dbReference type="PROSITE-ProRule" id="PRU00207"/>
    </source>
</evidence>
<evidence type="ECO:0000256" key="5">
    <source>
        <dbReference type="SAM" id="MobiDB-lite"/>
    </source>
</evidence>
<evidence type="ECO:0000305" key="6"/>
<name>Y0931_DICDI</name>
<protein>
    <recommendedName>
        <fullName>TNF receptor-associated factor family protein DDB_G0290931</fullName>
    </recommendedName>
</protein>
<feature type="chain" id="PRO_0000393759" description="TNF receptor-associated factor family protein DDB_G0290931">
    <location>
        <begin position="1"/>
        <end position="511"/>
    </location>
</feature>
<feature type="domain" description="MATH" evidence="3">
    <location>
        <begin position="374"/>
        <end position="499"/>
    </location>
</feature>
<feature type="zinc finger region" description="RING-type; degenerate">
    <location>
        <begin position="27"/>
        <end position="67"/>
    </location>
</feature>
<feature type="zinc finger region" description="TRAF-type 1" evidence="4">
    <location>
        <begin position="181"/>
        <end position="234"/>
    </location>
</feature>
<feature type="zinc finger region" description="TRAF-type 2" evidence="4">
    <location>
        <begin position="236"/>
        <end position="293"/>
    </location>
</feature>
<feature type="region of interest" description="Disordered" evidence="5">
    <location>
        <begin position="107"/>
        <end position="159"/>
    </location>
</feature>
<feature type="coiled-coil region" evidence="2">
    <location>
        <begin position="103"/>
        <end position="169"/>
    </location>
</feature>
<feature type="coiled-coil region" evidence="2">
    <location>
        <begin position="324"/>
        <end position="358"/>
    </location>
</feature>
<feature type="compositionally biased region" description="Acidic residues" evidence="5">
    <location>
        <begin position="109"/>
        <end position="155"/>
    </location>
</feature>
<dbReference type="EMBL" id="AAFI02000172">
    <property type="protein sequence ID" value="EAL61981.1"/>
    <property type="molecule type" value="Genomic_DNA"/>
</dbReference>
<dbReference type="RefSeq" id="XP_635487.1">
    <property type="nucleotide sequence ID" value="XM_630395.1"/>
</dbReference>
<dbReference type="SMR" id="Q54FD5"/>
<dbReference type="FunCoup" id="Q54FD5">
    <property type="interactions" value="11"/>
</dbReference>
<dbReference type="STRING" id="44689.Q54FD5"/>
<dbReference type="PaxDb" id="44689-DDB0252617"/>
<dbReference type="EnsemblProtists" id="EAL61981">
    <property type="protein sequence ID" value="EAL61981"/>
    <property type="gene ID" value="DDB_G0290931"/>
</dbReference>
<dbReference type="GeneID" id="8627903"/>
<dbReference type="KEGG" id="ddi:DDB_G0290931"/>
<dbReference type="dictyBase" id="DDB_G0290931">
    <property type="gene designation" value="trafL"/>
</dbReference>
<dbReference type="VEuPathDB" id="AmoebaDB:DDB_G0290931"/>
<dbReference type="eggNOG" id="KOG0297">
    <property type="taxonomic scope" value="Eukaryota"/>
</dbReference>
<dbReference type="HOGENOM" id="CLU_040980_0_0_1"/>
<dbReference type="InParanoid" id="Q54FD5"/>
<dbReference type="OMA" id="FIDGANQ"/>
<dbReference type="PhylomeDB" id="Q54FD5"/>
<dbReference type="PRO" id="PR:Q54FD5"/>
<dbReference type="Proteomes" id="UP000002195">
    <property type="component" value="Chromosome 5"/>
</dbReference>
<dbReference type="GO" id="GO:0005737">
    <property type="term" value="C:cytoplasm"/>
    <property type="evidence" value="ECO:0000318"/>
    <property type="project" value="GO_Central"/>
</dbReference>
<dbReference type="GO" id="GO:0008270">
    <property type="term" value="F:zinc ion binding"/>
    <property type="evidence" value="ECO:0007669"/>
    <property type="project" value="UniProtKB-KW"/>
</dbReference>
<dbReference type="CDD" id="cd00121">
    <property type="entry name" value="MATH"/>
    <property type="match status" value="1"/>
</dbReference>
<dbReference type="Gene3D" id="2.60.210.10">
    <property type="entry name" value="Apoptosis, Tumor Necrosis Factor Receptor Associated Protein 2, Chain A"/>
    <property type="match status" value="1"/>
</dbReference>
<dbReference type="Gene3D" id="3.30.40.10">
    <property type="entry name" value="Zinc/RING finger domain, C3HC4 (zinc finger)"/>
    <property type="match status" value="3"/>
</dbReference>
<dbReference type="InterPro" id="IPR002083">
    <property type="entry name" value="MATH/TRAF_dom"/>
</dbReference>
<dbReference type="InterPro" id="IPR008974">
    <property type="entry name" value="TRAF-like"/>
</dbReference>
<dbReference type="InterPro" id="IPR013083">
    <property type="entry name" value="Znf_RING/FYVE/PHD"/>
</dbReference>
<dbReference type="InterPro" id="IPR001293">
    <property type="entry name" value="Znf_TRAF"/>
</dbReference>
<dbReference type="PANTHER" id="PTHR10131:SF65">
    <property type="entry name" value="RING FINGER PROTEIN DG17-RELATED"/>
    <property type="match status" value="1"/>
</dbReference>
<dbReference type="PANTHER" id="PTHR10131">
    <property type="entry name" value="TNF RECEPTOR ASSOCIATED FACTOR"/>
    <property type="match status" value="1"/>
</dbReference>
<dbReference type="Pfam" id="PF22486">
    <property type="entry name" value="MATH_2"/>
    <property type="match status" value="1"/>
</dbReference>
<dbReference type="Pfam" id="PF02176">
    <property type="entry name" value="zf-TRAF"/>
    <property type="match status" value="1"/>
</dbReference>
<dbReference type="SMART" id="SM00061">
    <property type="entry name" value="MATH"/>
    <property type="match status" value="1"/>
</dbReference>
<dbReference type="SUPFAM" id="SSF57850">
    <property type="entry name" value="RING/U-box"/>
    <property type="match status" value="1"/>
</dbReference>
<dbReference type="SUPFAM" id="SSF49599">
    <property type="entry name" value="TRAF domain-like"/>
    <property type="match status" value="2"/>
</dbReference>
<dbReference type="PROSITE" id="PS50144">
    <property type="entry name" value="MATH"/>
    <property type="match status" value="1"/>
</dbReference>
<dbReference type="PROSITE" id="PS50145">
    <property type="entry name" value="ZF_TRAF"/>
    <property type="match status" value="1"/>
</dbReference>
<organism>
    <name type="scientific">Dictyostelium discoideum</name>
    <name type="common">Social amoeba</name>
    <dbReference type="NCBI Taxonomy" id="44689"/>
    <lineage>
        <taxon>Eukaryota</taxon>
        <taxon>Amoebozoa</taxon>
        <taxon>Evosea</taxon>
        <taxon>Eumycetozoa</taxon>
        <taxon>Dictyostelia</taxon>
        <taxon>Dictyosteliales</taxon>
        <taxon>Dictyosteliaceae</taxon>
        <taxon>Dictyostelium</taxon>
    </lineage>
</organism>